<feature type="chain" id="PRO_1000212345" description="UPF0235 protein Avin_03050">
    <location>
        <begin position="1"/>
        <end position="99"/>
    </location>
</feature>
<feature type="region of interest" description="Disordered" evidence="2">
    <location>
        <begin position="66"/>
        <end position="99"/>
    </location>
</feature>
<feature type="compositionally biased region" description="Basic residues" evidence="2">
    <location>
        <begin position="76"/>
        <end position="85"/>
    </location>
</feature>
<proteinExistence type="inferred from homology"/>
<comment type="similarity">
    <text evidence="1">Belongs to the UPF0235 family.</text>
</comment>
<dbReference type="EMBL" id="CP001157">
    <property type="protein sequence ID" value="ACO76565.1"/>
    <property type="molecule type" value="Genomic_DNA"/>
</dbReference>
<dbReference type="RefSeq" id="WP_012698993.1">
    <property type="nucleotide sequence ID" value="NC_012560.1"/>
</dbReference>
<dbReference type="SMR" id="C1DI68"/>
<dbReference type="STRING" id="322710.Avin_03050"/>
<dbReference type="EnsemblBacteria" id="ACO76565">
    <property type="protein sequence ID" value="ACO76565"/>
    <property type="gene ID" value="Avin_03050"/>
</dbReference>
<dbReference type="GeneID" id="88183758"/>
<dbReference type="KEGG" id="avn:Avin_03050"/>
<dbReference type="eggNOG" id="COG1872">
    <property type="taxonomic scope" value="Bacteria"/>
</dbReference>
<dbReference type="HOGENOM" id="CLU_130694_5_0_6"/>
<dbReference type="OrthoDB" id="9800587at2"/>
<dbReference type="Proteomes" id="UP000002424">
    <property type="component" value="Chromosome"/>
</dbReference>
<dbReference type="GO" id="GO:0005737">
    <property type="term" value="C:cytoplasm"/>
    <property type="evidence" value="ECO:0007669"/>
    <property type="project" value="TreeGrafter"/>
</dbReference>
<dbReference type="Gene3D" id="3.30.1200.10">
    <property type="entry name" value="YggU-like"/>
    <property type="match status" value="1"/>
</dbReference>
<dbReference type="HAMAP" id="MF_00634">
    <property type="entry name" value="UPF0235"/>
    <property type="match status" value="1"/>
</dbReference>
<dbReference type="InterPro" id="IPR003746">
    <property type="entry name" value="DUF167"/>
</dbReference>
<dbReference type="InterPro" id="IPR036591">
    <property type="entry name" value="YggU-like_sf"/>
</dbReference>
<dbReference type="NCBIfam" id="TIGR00251">
    <property type="entry name" value="DUF167 family protein"/>
    <property type="match status" value="1"/>
</dbReference>
<dbReference type="PANTHER" id="PTHR13420">
    <property type="entry name" value="UPF0235 PROTEIN C15ORF40"/>
    <property type="match status" value="1"/>
</dbReference>
<dbReference type="PANTHER" id="PTHR13420:SF7">
    <property type="entry name" value="UPF0235 PROTEIN C15ORF40"/>
    <property type="match status" value="1"/>
</dbReference>
<dbReference type="Pfam" id="PF02594">
    <property type="entry name" value="DUF167"/>
    <property type="match status" value="1"/>
</dbReference>
<dbReference type="SMART" id="SM01152">
    <property type="entry name" value="DUF167"/>
    <property type="match status" value="1"/>
</dbReference>
<dbReference type="SUPFAM" id="SSF69786">
    <property type="entry name" value="YggU-like"/>
    <property type="match status" value="1"/>
</dbReference>
<name>Y305_AZOVD</name>
<reference key="1">
    <citation type="journal article" date="2009" name="J. Bacteriol.">
        <title>Genome sequence of Azotobacter vinelandii, an obligate aerobe specialized to support diverse anaerobic metabolic processes.</title>
        <authorList>
            <person name="Setubal J.C."/>
            <person name="Dos Santos P."/>
            <person name="Goldman B.S."/>
            <person name="Ertesvaag H."/>
            <person name="Espin G."/>
            <person name="Rubio L.M."/>
            <person name="Valla S."/>
            <person name="Almeida N.F."/>
            <person name="Balasubramanian D."/>
            <person name="Cromes L."/>
            <person name="Curatti L."/>
            <person name="Du Z."/>
            <person name="Godsy E."/>
            <person name="Goodner B."/>
            <person name="Hellner-Burris K."/>
            <person name="Hernandez J.A."/>
            <person name="Houmiel K."/>
            <person name="Imperial J."/>
            <person name="Kennedy C."/>
            <person name="Larson T.J."/>
            <person name="Latreille P."/>
            <person name="Ligon L.S."/>
            <person name="Lu J."/>
            <person name="Maerk M."/>
            <person name="Miller N.M."/>
            <person name="Norton S."/>
            <person name="O'Carroll I.P."/>
            <person name="Paulsen I."/>
            <person name="Raulfs E.C."/>
            <person name="Roemer R."/>
            <person name="Rosser J."/>
            <person name="Segura D."/>
            <person name="Slater S."/>
            <person name="Stricklin S.L."/>
            <person name="Studholme D.J."/>
            <person name="Sun J."/>
            <person name="Viana C.J."/>
            <person name="Wallin E."/>
            <person name="Wang B."/>
            <person name="Wheeler C."/>
            <person name="Zhu H."/>
            <person name="Dean D.R."/>
            <person name="Dixon R."/>
            <person name="Wood D."/>
        </authorList>
    </citation>
    <scope>NUCLEOTIDE SEQUENCE [LARGE SCALE GENOMIC DNA]</scope>
    <source>
        <strain>DJ / ATCC BAA-1303</strain>
    </source>
</reference>
<accession>C1DI68</accession>
<evidence type="ECO:0000255" key="1">
    <source>
        <dbReference type="HAMAP-Rule" id="MF_00634"/>
    </source>
</evidence>
<evidence type="ECO:0000256" key="2">
    <source>
        <dbReference type="SAM" id="MobiDB-lite"/>
    </source>
</evidence>
<sequence length="99" mass="10990">MSWYRWDGEDLILACHLQPKASKDEFAGLHGERLKIRLTAPPVEGKANAHLLAFLAGVFGVPKSQVSLESGESNRQKRVRIRRPRQLPALPGLAPRPDA</sequence>
<gene>
    <name type="ordered locus">Avin_03050</name>
</gene>
<protein>
    <recommendedName>
        <fullName evidence="1">UPF0235 protein Avin_03050</fullName>
    </recommendedName>
</protein>
<organism>
    <name type="scientific">Azotobacter vinelandii (strain DJ / ATCC BAA-1303)</name>
    <dbReference type="NCBI Taxonomy" id="322710"/>
    <lineage>
        <taxon>Bacteria</taxon>
        <taxon>Pseudomonadati</taxon>
        <taxon>Pseudomonadota</taxon>
        <taxon>Gammaproteobacteria</taxon>
        <taxon>Pseudomonadales</taxon>
        <taxon>Pseudomonadaceae</taxon>
        <taxon>Azotobacter</taxon>
    </lineage>
</organism>